<feature type="chain" id="PRO_1000097805" description="tRNA pseudouridine synthase A">
    <location>
        <begin position="1"/>
        <end position="245"/>
    </location>
</feature>
<feature type="active site" description="Nucleophile" evidence="1">
    <location>
        <position position="52"/>
    </location>
</feature>
<feature type="binding site" evidence="1">
    <location>
        <position position="111"/>
    </location>
    <ligand>
        <name>substrate</name>
    </ligand>
</feature>
<reference key="1">
    <citation type="journal article" date="2008" name="Mol. Biol. Evol.">
        <title>Genome evolution of Wolbachia strain wPip from the Culex pipiens group.</title>
        <authorList>
            <person name="Klasson L."/>
            <person name="Walker T."/>
            <person name="Sebaihia M."/>
            <person name="Sanders M.J."/>
            <person name="Quail M.A."/>
            <person name="Lord A."/>
            <person name="Sanders S."/>
            <person name="Earl J."/>
            <person name="O'Neill S.L."/>
            <person name="Thomson N."/>
            <person name="Sinkins S.P."/>
            <person name="Parkhill J."/>
        </authorList>
    </citation>
    <scope>NUCLEOTIDE SEQUENCE [LARGE SCALE GENOMIC DNA]</scope>
    <source>
        <strain>wPip</strain>
    </source>
</reference>
<evidence type="ECO:0000255" key="1">
    <source>
        <dbReference type="HAMAP-Rule" id="MF_00171"/>
    </source>
</evidence>
<proteinExistence type="inferred from homology"/>
<keyword id="KW-0413">Isomerase</keyword>
<keyword id="KW-0819">tRNA processing</keyword>
<sequence>MRYKITIEYNGSSFSGWQKQQHSANSIQETIENAIFNFSGERVSLHCGGRTDTGVHALGQVAHFNMERQFELYRIRNGINYHLKAIPIVVLSAEAVDDAFHARFSAKKRYYEYRIINRYAPAALEIGYVWQVFNPLDVNIMREAARHLLGKHNLSSFRSKDCQATNPVRTIDDIDIVQNGSHIYIKISAISFLHNQVRIIVGTLVEFGKNRTNPQEMLNILSQCKRNAAGITAPPHGLYLVKIDY</sequence>
<organism>
    <name type="scientific">Wolbachia pipientis subsp. Culex pipiens (strain wPip)</name>
    <dbReference type="NCBI Taxonomy" id="570417"/>
    <lineage>
        <taxon>Bacteria</taxon>
        <taxon>Pseudomonadati</taxon>
        <taxon>Pseudomonadota</taxon>
        <taxon>Alphaproteobacteria</taxon>
        <taxon>Rickettsiales</taxon>
        <taxon>Anaplasmataceae</taxon>
        <taxon>Wolbachieae</taxon>
        <taxon>Wolbachia</taxon>
    </lineage>
</organism>
<accession>B3CMC1</accession>
<protein>
    <recommendedName>
        <fullName evidence="1">tRNA pseudouridine synthase A</fullName>
        <ecNumber evidence="1">5.4.99.12</ecNumber>
    </recommendedName>
    <alternativeName>
        <fullName evidence="1">tRNA pseudouridine(38-40) synthase</fullName>
    </alternativeName>
    <alternativeName>
        <fullName evidence="1">tRNA pseudouridylate synthase I</fullName>
    </alternativeName>
    <alternativeName>
        <fullName evidence="1">tRNA-uridine isomerase I</fullName>
    </alternativeName>
</protein>
<comment type="function">
    <text evidence="1">Formation of pseudouridine at positions 38, 39 and 40 in the anticodon stem and loop of transfer RNAs.</text>
</comment>
<comment type="catalytic activity">
    <reaction evidence="1">
        <text>uridine(38/39/40) in tRNA = pseudouridine(38/39/40) in tRNA</text>
        <dbReference type="Rhea" id="RHEA:22376"/>
        <dbReference type="Rhea" id="RHEA-COMP:10085"/>
        <dbReference type="Rhea" id="RHEA-COMP:10087"/>
        <dbReference type="ChEBI" id="CHEBI:65314"/>
        <dbReference type="ChEBI" id="CHEBI:65315"/>
        <dbReference type="EC" id="5.4.99.12"/>
    </reaction>
</comment>
<comment type="subunit">
    <text evidence="1">Homodimer.</text>
</comment>
<comment type="similarity">
    <text evidence="1">Belongs to the tRNA pseudouridine synthase TruA family.</text>
</comment>
<gene>
    <name evidence="1" type="primary">truA</name>
    <name type="ordered locus">WP0933</name>
</gene>
<name>TRUA_WOLPP</name>
<dbReference type="EC" id="5.4.99.12" evidence="1"/>
<dbReference type="EMBL" id="AM999887">
    <property type="protein sequence ID" value="CAQ55041.1"/>
    <property type="molecule type" value="Genomic_DNA"/>
</dbReference>
<dbReference type="RefSeq" id="WP_007302324.1">
    <property type="nucleotide sequence ID" value="NC_010981.1"/>
</dbReference>
<dbReference type="SMR" id="B3CMC1"/>
<dbReference type="KEGG" id="wpi:WP0933"/>
<dbReference type="eggNOG" id="COG0101">
    <property type="taxonomic scope" value="Bacteria"/>
</dbReference>
<dbReference type="HOGENOM" id="CLU_014673_0_2_5"/>
<dbReference type="Proteomes" id="UP000008814">
    <property type="component" value="Chromosome"/>
</dbReference>
<dbReference type="GO" id="GO:0003723">
    <property type="term" value="F:RNA binding"/>
    <property type="evidence" value="ECO:0007669"/>
    <property type="project" value="InterPro"/>
</dbReference>
<dbReference type="GO" id="GO:0160147">
    <property type="term" value="F:tRNA pseudouridine(38-40) synthase activity"/>
    <property type="evidence" value="ECO:0007669"/>
    <property type="project" value="UniProtKB-EC"/>
</dbReference>
<dbReference type="GO" id="GO:0031119">
    <property type="term" value="P:tRNA pseudouridine synthesis"/>
    <property type="evidence" value="ECO:0007669"/>
    <property type="project" value="UniProtKB-UniRule"/>
</dbReference>
<dbReference type="CDD" id="cd02570">
    <property type="entry name" value="PseudoU_synth_EcTruA"/>
    <property type="match status" value="1"/>
</dbReference>
<dbReference type="FunFam" id="3.30.70.580:FF:000001">
    <property type="entry name" value="tRNA pseudouridine synthase A"/>
    <property type="match status" value="1"/>
</dbReference>
<dbReference type="Gene3D" id="3.30.70.660">
    <property type="entry name" value="Pseudouridine synthase I, catalytic domain, C-terminal subdomain"/>
    <property type="match status" value="1"/>
</dbReference>
<dbReference type="Gene3D" id="3.30.70.580">
    <property type="entry name" value="Pseudouridine synthase I, catalytic domain, N-terminal subdomain"/>
    <property type="match status" value="1"/>
</dbReference>
<dbReference type="HAMAP" id="MF_00171">
    <property type="entry name" value="TruA"/>
    <property type="match status" value="1"/>
</dbReference>
<dbReference type="InterPro" id="IPR020103">
    <property type="entry name" value="PsdUridine_synth_cat_dom_sf"/>
</dbReference>
<dbReference type="InterPro" id="IPR001406">
    <property type="entry name" value="PsdUridine_synth_TruA"/>
</dbReference>
<dbReference type="InterPro" id="IPR020097">
    <property type="entry name" value="PsdUridine_synth_TruA_a/b_dom"/>
</dbReference>
<dbReference type="InterPro" id="IPR020095">
    <property type="entry name" value="PsdUridine_synth_TruA_C"/>
</dbReference>
<dbReference type="InterPro" id="IPR020094">
    <property type="entry name" value="TruA/RsuA/RluB/E/F_N"/>
</dbReference>
<dbReference type="NCBIfam" id="TIGR00071">
    <property type="entry name" value="hisT_truA"/>
    <property type="match status" value="1"/>
</dbReference>
<dbReference type="PANTHER" id="PTHR11142">
    <property type="entry name" value="PSEUDOURIDYLATE SYNTHASE"/>
    <property type="match status" value="1"/>
</dbReference>
<dbReference type="PANTHER" id="PTHR11142:SF0">
    <property type="entry name" value="TRNA PSEUDOURIDINE SYNTHASE-LIKE 1"/>
    <property type="match status" value="1"/>
</dbReference>
<dbReference type="Pfam" id="PF01416">
    <property type="entry name" value="PseudoU_synth_1"/>
    <property type="match status" value="2"/>
</dbReference>
<dbReference type="PIRSF" id="PIRSF001430">
    <property type="entry name" value="tRNA_psdUrid_synth"/>
    <property type="match status" value="1"/>
</dbReference>
<dbReference type="SUPFAM" id="SSF55120">
    <property type="entry name" value="Pseudouridine synthase"/>
    <property type="match status" value="1"/>
</dbReference>